<organism>
    <name type="scientific">Geobacillus kaustophilus (strain HTA426)</name>
    <dbReference type="NCBI Taxonomy" id="235909"/>
    <lineage>
        <taxon>Bacteria</taxon>
        <taxon>Bacillati</taxon>
        <taxon>Bacillota</taxon>
        <taxon>Bacilli</taxon>
        <taxon>Bacillales</taxon>
        <taxon>Anoxybacillaceae</taxon>
        <taxon>Geobacillus</taxon>
        <taxon>Geobacillus thermoleovorans group</taxon>
    </lineage>
</organism>
<gene>
    <name evidence="1" type="primary">dnaK</name>
    <name type="ordered locus">GK2504</name>
</gene>
<sequence>MSKIIGIDLGTTNSCVAVLEGGEVKVIPNPEGNRTTPSVVAFKNGERLVGEVAKRQAITNPNTIISIKRHMGTDYKVEIEGKQYTPQEISAIILQYLKSYAEDYLGEPVTRAVITVPAYFNDAQRQATKDAGRIAGLEVERIINEPTAAALAYGLDKEEDQTILVYDLGGGTFDVSILELGDGVFEVKATAGDNHLGGDDFDQVIIDYLVNQFKQEHGIDLSKDKMALQRLKDAAEKAKKELSGVTQTQISLPFISANENGPLHLEMTLTRAKFEELSAHLVERTMGPVRQALQDAGLTPADIDKVILVGGSTRIPAVQEAIKRELGKEPHKGVNPDEVVAIGAAIQGGVIAGEVKDVVLLDVTPLSLGIETMGGVFTKLIERNTTIPTSKSQVFTTAADNQTTVDIHVLQGERPMAADNKSLGRFQLTGIPPAPRGVPQIEVTFDIDANGIVHVRAKDLGTNKEQSITIKSSSGLSEEEIQRMIKEAEENAEADRKRKEAAELRNEADQLIFMTDKTLKEVEGKVSADEIKKAQDAKEALKAALEKNDIDDIRKKKDALQEAVQQLSIKLYEQAAKQAQSAGSQGGAANHKDNVVDAEFEEVNDDK</sequence>
<keyword id="KW-0002">3D-structure</keyword>
<keyword id="KW-0067">ATP-binding</keyword>
<keyword id="KW-0143">Chaperone</keyword>
<keyword id="KW-0547">Nucleotide-binding</keyword>
<keyword id="KW-0597">Phosphoprotein</keyword>
<keyword id="KW-1185">Reference proteome</keyword>
<keyword id="KW-0346">Stress response</keyword>
<reference key="1">
    <citation type="journal article" date="2004" name="Nucleic Acids Res.">
        <title>Thermoadaptation trait revealed by the genome sequence of thermophilic Geobacillus kaustophilus.</title>
        <authorList>
            <person name="Takami H."/>
            <person name="Takaki Y."/>
            <person name="Chee G.-J."/>
            <person name="Nishi S."/>
            <person name="Shimamura S."/>
            <person name="Suzuki H."/>
            <person name="Matsui S."/>
            <person name="Uchiyama I."/>
        </authorList>
    </citation>
    <scope>NUCLEOTIDE SEQUENCE [LARGE SCALE GENOMIC DNA]</scope>
    <source>
        <strain>HTA426</strain>
    </source>
</reference>
<comment type="function">
    <text evidence="1">Acts as a chaperone.</text>
</comment>
<comment type="induction">
    <text evidence="1">By stress conditions e.g. heat shock.</text>
</comment>
<comment type="similarity">
    <text evidence="1">Belongs to the heat shock protein 70 family.</text>
</comment>
<name>DNAK_GEOKA</name>
<proteinExistence type="evidence at protein level"/>
<dbReference type="EMBL" id="BA000043">
    <property type="protein sequence ID" value="BAD76789.1"/>
    <property type="molecule type" value="Genomic_DNA"/>
</dbReference>
<dbReference type="RefSeq" id="WP_011231983.1">
    <property type="nucleotide sequence ID" value="NC_006510.1"/>
</dbReference>
<dbReference type="PDB" id="2V7Y">
    <property type="method" value="X-ray"/>
    <property type="resolution" value="2.37 A"/>
    <property type="chains" value="A=1-509"/>
</dbReference>
<dbReference type="PDB" id="4ANI">
    <property type="method" value="X-ray"/>
    <property type="resolution" value="4.09 A"/>
    <property type="chains" value="C/D/G/H=1-509"/>
</dbReference>
<dbReference type="PDBsum" id="2V7Y"/>
<dbReference type="PDBsum" id="4ANI"/>
<dbReference type="SMR" id="Q5KWZ7"/>
<dbReference type="STRING" id="235909.GK2504"/>
<dbReference type="KEGG" id="gka:GK2504"/>
<dbReference type="eggNOG" id="COG0443">
    <property type="taxonomic scope" value="Bacteria"/>
</dbReference>
<dbReference type="HOGENOM" id="CLU_005965_2_4_9"/>
<dbReference type="EvolutionaryTrace" id="Q5KWZ7"/>
<dbReference type="Proteomes" id="UP000001172">
    <property type="component" value="Chromosome"/>
</dbReference>
<dbReference type="GO" id="GO:0005524">
    <property type="term" value="F:ATP binding"/>
    <property type="evidence" value="ECO:0007669"/>
    <property type="project" value="UniProtKB-UniRule"/>
</dbReference>
<dbReference type="GO" id="GO:0140662">
    <property type="term" value="F:ATP-dependent protein folding chaperone"/>
    <property type="evidence" value="ECO:0007669"/>
    <property type="project" value="InterPro"/>
</dbReference>
<dbReference type="GO" id="GO:0051082">
    <property type="term" value="F:unfolded protein binding"/>
    <property type="evidence" value="ECO:0007669"/>
    <property type="project" value="InterPro"/>
</dbReference>
<dbReference type="CDD" id="cd10234">
    <property type="entry name" value="ASKHA_NBD_HSP70_DnaK-like"/>
    <property type="match status" value="1"/>
</dbReference>
<dbReference type="FunFam" id="2.60.34.10:FF:000014">
    <property type="entry name" value="Chaperone protein DnaK HSP70"/>
    <property type="match status" value="1"/>
</dbReference>
<dbReference type="FunFam" id="3.30.420.40:FF:000020">
    <property type="entry name" value="Chaperone protein HscA homolog"/>
    <property type="match status" value="1"/>
</dbReference>
<dbReference type="FunFam" id="3.30.420.40:FF:000545">
    <property type="entry name" value="Endoplasmic reticulum chaperone BiP"/>
    <property type="match status" value="1"/>
</dbReference>
<dbReference type="FunFam" id="1.20.1270.10:FF:000001">
    <property type="entry name" value="Molecular chaperone DnaK"/>
    <property type="match status" value="1"/>
</dbReference>
<dbReference type="FunFam" id="3.90.640.10:FF:000003">
    <property type="entry name" value="Molecular chaperone DnaK"/>
    <property type="match status" value="1"/>
</dbReference>
<dbReference type="Gene3D" id="1.20.1270.10">
    <property type="match status" value="1"/>
</dbReference>
<dbReference type="Gene3D" id="3.30.420.40">
    <property type="match status" value="2"/>
</dbReference>
<dbReference type="Gene3D" id="3.90.640.10">
    <property type="entry name" value="Actin, Chain A, domain 4"/>
    <property type="match status" value="1"/>
</dbReference>
<dbReference type="Gene3D" id="2.60.34.10">
    <property type="entry name" value="Substrate Binding Domain Of DNAk, Chain A, domain 1"/>
    <property type="match status" value="1"/>
</dbReference>
<dbReference type="HAMAP" id="MF_00332">
    <property type="entry name" value="DnaK"/>
    <property type="match status" value="1"/>
</dbReference>
<dbReference type="InterPro" id="IPR043129">
    <property type="entry name" value="ATPase_NBD"/>
</dbReference>
<dbReference type="InterPro" id="IPR012725">
    <property type="entry name" value="Chaperone_DnaK"/>
</dbReference>
<dbReference type="InterPro" id="IPR018181">
    <property type="entry name" value="Heat_shock_70_CS"/>
</dbReference>
<dbReference type="InterPro" id="IPR029048">
    <property type="entry name" value="HSP70_C_sf"/>
</dbReference>
<dbReference type="InterPro" id="IPR029047">
    <property type="entry name" value="HSP70_peptide-bd_sf"/>
</dbReference>
<dbReference type="InterPro" id="IPR013126">
    <property type="entry name" value="Hsp_70_fam"/>
</dbReference>
<dbReference type="NCBIfam" id="NF001413">
    <property type="entry name" value="PRK00290.1"/>
    <property type="match status" value="1"/>
</dbReference>
<dbReference type="NCBIfam" id="TIGR02350">
    <property type="entry name" value="prok_dnaK"/>
    <property type="match status" value="1"/>
</dbReference>
<dbReference type="PANTHER" id="PTHR19375">
    <property type="entry name" value="HEAT SHOCK PROTEIN 70KDA"/>
    <property type="match status" value="1"/>
</dbReference>
<dbReference type="Pfam" id="PF00012">
    <property type="entry name" value="HSP70"/>
    <property type="match status" value="1"/>
</dbReference>
<dbReference type="PRINTS" id="PR00301">
    <property type="entry name" value="HEATSHOCK70"/>
</dbReference>
<dbReference type="SUPFAM" id="SSF53067">
    <property type="entry name" value="Actin-like ATPase domain"/>
    <property type="match status" value="2"/>
</dbReference>
<dbReference type="SUPFAM" id="SSF100934">
    <property type="entry name" value="Heat shock protein 70kD (HSP70), C-terminal subdomain"/>
    <property type="match status" value="1"/>
</dbReference>
<dbReference type="SUPFAM" id="SSF100920">
    <property type="entry name" value="Heat shock protein 70kD (HSP70), peptide-binding domain"/>
    <property type="match status" value="1"/>
</dbReference>
<dbReference type="PROSITE" id="PS00297">
    <property type="entry name" value="HSP70_1"/>
    <property type="match status" value="1"/>
</dbReference>
<dbReference type="PROSITE" id="PS00329">
    <property type="entry name" value="HSP70_2"/>
    <property type="match status" value="1"/>
</dbReference>
<dbReference type="PROSITE" id="PS01036">
    <property type="entry name" value="HSP70_3"/>
    <property type="match status" value="1"/>
</dbReference>
<evidence type="ECO:0000255" key="1">
    <source>
        <dbReference type="HAMAP-Rule" id="MF_00332"/>
    </source>
</evidence>
<evidence type="ECO:0000256" key="2">
    <source>
        <dbReference type="SAM" id="MobiDB-lite"/>
    </source>
</evidence>
<evidence type="ECO:0007829" key="3">
    <source>
        <dbReference type="PDB" id="2V7Y"/>
    </source>
</evidence>
<protein>
    <recommendedName>
        <fullName evidence="1">Chaperone protein DnaK</fullName>
    </recommendedName>
    <alternativeName>
        <fullName evidence="1">HSP70</fullName>
    </alternativeName>
    <alternativeName>
        <fullName evidence="1">Heat shock 70 kDa protein</fullName>
    </alternativeName>
    <alternativeName>
        <fullName evidence="1">Heat shock protein 70</fullName>
    </alternativeName>
</protein>
<accession>Q5KWZ7</accession>
<feature type="chain" id="PRO_0000225966" description="Chaperone protein DnaK">
    <location>
        <begin position="1"/>
        <end position="607"/>
    </location>
</feature>
<feature type="region of interest" description="Disordered" evidence="2">
    <location>
        <begin position="575"/>
        <end position="607"/>
    </location>
</feature>
<feature type="compositionally biased region" description="Low complexity" evidence="2">
    <location>
        <begin position="575"/>
        <end position="589"/>
    </location>
</feature>
<feature type="compositionally biased region" description="Acidic residues" evidence="2">
    <location>
        <begin position="596"/>
        <end position="607"/>
    </location>
</feature>
<feature type="modified residue" description="Phosphothreonine; by autocatalysis" evidence="1">
    <location>
        <position position="172"/>
    </location>
</feature>
<feature type="strand" evidence="3">
    <location>
        <begin position="4"/>
        <end position="9"/>
    </location>
</feature>
<feature type="strand" evidence="3">
    <location>
        <begin position="11"/>
        <end position="20"/>
    </location>
</feature>
<feature type="strand" evidence="3">
    <location>
        <begin position="23"/>
        <end position="26"/>
    </location>
</feature>
<feature type="strand" evidence="3">
    <location>
        <begin position="34"/>
        <end position="37"/>
    </location>
</feature>
<feature type="strand" evidence="3">
    <location>
        <begin position="39"/>
        <end position="50"/>
    </location>
</feature>
<feature type="helix" evidence="3">
    <location>
        <begin position="51"/>
        <end position="54"/>
    </location>
</feature>
<feature type="turn" evidence="3">
    <location>
        <begin position="55"/>
        <end position="59"/>
    </location>
</feature>
<feature type="strand" evidence="3">
    <location>
        <begin position="61"/>
        <end position="65"/>
    </location>
</feature>
<feature type="helix" evidence="3">
    <location>
        <begin position="67"/>
        <end position="69"/>
    </location>
</feature>
<feature type="turn" evidence="3">
    <location>
        <begin position="70"/>
        <end position="72"/>
    </location>
</feature>
<feature type="strand" evidence="3">
    <location>
        <begin position="77"/>
        <end position="79"/>
    </location>
</feature>
<feature type="strand" evidence="3">
    <location>
        <begin position="82"/>
        <end position="84"/>
    </location>
</feature>
<feature type="helix" evidence="3">
    <location>
        <begin position="86"/>
        <end position="105"/>
    </location>
</feature>
<feature type="strand" evidence="3">
    <location>
        <begin position="111"/>
        <end position="116"/>
    </location>
</feature>
<feature type="helix" evidence="3">
    <location>
        <begin position="122"/>
        <end position="134"/>
    </location>
</feature>
<feature type="strand" evidence="3">
    <location>
        <begin position="138"/>
        <end position="144"/>
    </location>
</feature>
<feature type="helix" evidence="3">
    <location>
        <begin position="145"/>
        <end position="152"/>
    </location>
</feature>
<feature type="helix" evidence="3">
    <location>
        <begin position="155"/>
        <end position="157"/>
    </location>
</feature>
<feature type="strand" evidence="3">
    <location>
        <begin position="160"/>
        <end position="168"/>
    </location>
</feature>
<feature type="strand" evidence="3">
    <location>
        <begin position="173"/>
        <end position="181"/>
    </location>
</feature>
<feature type="strand" evidence="3">
    <location>
        <begin position="184"/>
        <end position="193"/>
    </location>
</feature>
<feature type="helix" evidence="3">
    <location>
        <begin position="198"/>
        <end position="217"/>
    </location>
</feature>
<feature type="helix" evidence="3">
    <location>
        <begin position="221"/>
        <end position="223"/>
    </location>
</feature>
<feature type="helix" evidence="3">
    <location>
        <begin position="225"/>
        <end position="241"/>
    </location>
</feature>
<feature type="turn" evidence="3">
    <location>
        <begin position="242"/>
        <end position="244"/>
    </location>
</feature>
<feature type="strand" evidence="3">
    <location>
        <begin position="246"/>
        <end position="258"/>
    </location>
</feature>
<feature type="strand" evidence="3">
    <location>
        <begin position="261"/>
        <end position="270"/>
    </location>
</feature>
<feature type="helix" evidence="3">
    <location>
        <begin position="271"/>
        <end position="277"/>
    </location>
</feature>
<feature type="helix" evidence="3">
    <location>
        <begin position="279"/>
        <end position="283"/>
    </location>
</feature>
<feature type="helix" evidence="3">
    <location>
        <begin position="286"/>
        <end position="296"/>
    </location>
</feature>
<feature type="helix" evidence="3">
    <location>
        <begin position="300"/>
        <end position="302"/>
    </location>
</feature>
<feature type="strand" evidence="3">
    <location>
        <begin position="304"/>
        <end position="310"/>
    </location>
</feature>
<feature type="helix" evidence="3">
    <location>
        <begin position="311"/>
        <end position="314"/>
    </location>
</feature>
<feature type="helix" evidence="3">
    <location>
        <begin position="316"/>
        <end position="326"/>
    </location>
</feature>
<feature type="turn" evidence="3">
    <location>
        <begin position="336"/>
        <end position="338"/>
    </location>
</feature>
<feature type="helix" evidence="3">
    <location>
        <begin position="339"/>
        <end position="352"/>
    </location>
</feature>
<feature type="strand" evidence="3">
    <location>
        <begin position="365"/>
        <end position="372"/>
    </location>
</feature>
<feature type="turn" evidence="3">
    <location>
        <begin position="373"/>
        <end position="375"/>
    </location>
</feature>
<feature type="strand" evidence="3">
    <location>
        <begin position="376"/>
        <end position="381"/>
    </location>
</feature>
<feature type="strand" evidence="3">
    <location>
        <begin position="386"/>
        <end position="395"/>
    </location>
</feature>
<feature type="strand" evidence="3">
    <location>
        <begin position="404"/>
        <end position="416"/>
    </location>
</feature>
<feature type="helix" evidence="3">
    <location>
        <begin position="417"/>
        <end position="419"/>
    </location>
</feature>
<feature type="strand" evidence="3">
    <location>
        <begin position="420"/>
        <end position="429"/>
    </location>
</feature>
<feature type="strand" evidence="3">
    <location>
        <begin position="441"/>
        <end position="447"/>
    </location>
</feature>
<feature type="strand" evidence="3">
    <location>
        <begin position="453"/>
        <end position="459"/>
    </location>
</feature>
<feature type="turn" evidence="3">
    <location>
        <begin position="460"/>
        <end position="462"/>
    </location>
</feature>
<feature type="strand" evidence="3">
    <location>
        <begin position="465"/>
        <end position="470"/>
    </location>
</feature>
<feature type="helix" evidence="3">
    <location>
        <begin position="479"/>
        <end position="490"/>
    </location>
</feature>
<feature type="helix" evidence="3">
    <location>
        <begin position="493"/>
        <end position="500"/>
    </location>
</feature>